<proteinExistence type="evidence at protein level"/>
<reference key="1">
    <citation type="journal article" date="1996" name="Gene">
        <title>Genetic and transcriptional organization of the Bacillus subtilis spc-alpha region.</title>
        <authorList>
            <person name="Suh J.-W."/>
            <person name="Boylan S.A."/>
            <person name="Oh S.H."/>
            <person name="Price C.W."/>
        </authorList>
    </citation>
    <scope>NUCLEOTIDE SEQUENCE [GENOMIC DNA]</scope>
    <source>
        <strain>168 / Marburg / ATCC 6051 / DSM 10 / JCM 1465 / NBRC 13719 / NCIMB 3610 / NRRL NRS-744 / VKM B-501</strain>
    </source>
</reference>
<reference key="2">
    <citation type="journal article" date="1996" name="Microbiology">
        <title>Sequence analysis of a 50 kb region between spo0H and rrnH on the Bacillus subtilis chromosome.</title>
        <authorList>
            <person name="Yasumoto K."/>
            <person name="Liu H."/>
            <person name="Jeong S.M."/>
            <person name="Ohashi Y."/>
            <person name="Kakinuma S."/>
            <person name="Tanaka K."/>
            <person name="Kawamura F."/>
            <person name="Yoshikawa H."/>
            <person name="Takahashi H."/>
        </authorList>
    </citation>
    <scope>NUCLEOTIDE SEQUENCE [GENOMIC DNA]</scope>
    <source>
        <strain>168</strain>
    </source>
</reference>
<reference key="3">
    <citation type="journal article" date="1997" name="Nature">
        <title>The complete genome sequence of the Gram-positive bacterium Bacillus subtilis.</title>
        <authorList>
            <person name="Kunst F."/>
            <person name="Ogasawara N."/>
            <person name="Moszer I."/>
            <person name="Albertini A.M."/>
            <person name="Alloni G."/>
            <person name="Azevedo V."/>
            <person name="Bertero M.G."/>
            <person name="Bessieres P."/>
            <person name="Bolotin A."/>
            <person name="Borchert S."/>
            <person name="Borriss R."/>
            <person name="Boursier L."/>
            <person name="Brans A."/>
            <person name="Braun M."/>
            <person name="Brignell S.C."/>
            <person name="Bron S."/>
            <person name="Brouillet S."/>
            <person name="Bruschi C.V."/>
            <person name="Caldwell B."/>
            <person name="Capuano V."/>
            <person name="Carter N.M."/>
            <person name="Choi S.-K."/>
            <person name="Codani J.-J."/>
            <person name="Connerton I.F."/>
            <person name="Cummings N.J."/>
            <person name="Daniel R.A."/>
            <person name="Denizot F."/>
            <person name="Devine K.M."/>
            <person name="Duesterhoeft A."/>
            <person name="Ehrlich S.D."/>
            <person name="Emmerson P.T."/>
            <person name="Entian K.-D."/>
            <person name="Errington J."/>
            <person name="Fabret C."/>
            <person name="Ferrari E."/>
            <person name="Foulger D."/>
            <person name="Fritz C."/>
            <person name="Fujita M."/>
            <person name="Fujita Y."/>
            <person name="Fuma S."/>
            <person name="Galizzi A."/>
            <person name="Galleron N."/>
            <person name="Ghim S.-Y."/>
            <person name="Glaser P."/>
            <person name="Goffeau A."/>
            <person name="Golightly E.J."/>
            <person name="Grandi G."/>
            <person name="Guiseppi G."/>
            <person name="Guy B.J."/>
            <person name="Haga K."/>
            <person name="Haiech J."/>
            <person name="Harwood C.R."/>
            <person name="Henaut A."/>
            <person name="Hilbert H."/>
            <person name="Holsappel S."/>
            <person name="Hosono S."/>
            <person name="Hullo M.-F."/>
            <person name="Itaya M."/>
            <person name="Jones L.-M."/>
            <person name="Joris B."/>
            <person name="Karamata D."/>
            <person name="Kasahara Y."/>
            <person name="Klaerr-Blanchard M."/>
            <person name="Klein C."/>
            <person name="Kobayashi Y."/>
            <person name="Koetter P."/>
            <person name="Koningstein G."/>
            <person name="Krogh S."/>
            <person name="Kumano M."/>
            <person name="Kurita K."/>
            <person name="Lapidus A."/>
            <person name="Lardinois S."/>
            <person name="Lauber J."/>
            <person name="Lazarevic V."/>
            <person name="Lee S.-M."/>
            <person name="Levine A."/>
            <person name="Liu H."/>
            <person name="Masuda S."/>
            <person name="Mauel C."/>
            <person name="Medigue C."/>
            <person name="Medina N."/>
            <person name="Mellado R.P."/>
            <person name="Mizuno M."/>
            <person name="Moestl D."/>
            <person name="Nakai S."/>
            <person name="Noback M."/>
            <person name="Noone D."/>
            <person name="O'Reilly M."/>
            <person name="Ogawa K."/>
            <person name="Ogiwara A."/>
            <person name="Oudega B."/>
            <person name="Park S.-H."/>
            <person name="Parro V."/>
            <person name="Pohl T.M."/>
            <person name="Portetelle D."/>
            <person name="Porwollik S."/>
            <person name="Prescott A.M."/>
            <person name="Presecan E."/>
            <person name="Pujic P."/>
            <person name="Purnelle B."/>
            <person name="Rapoport G."/>
            <person name="Rey M."/>
            <person name="Reynolds S."/>
            <person name="Rieger M."/>
            <person name="Rivolta C."/>
            <person name="Rocha E."/>
            <person name="Roche B."/>
            <person name="Rose M."/>
            <person name="Sadaie Y."/>
            <person name="Sato T."/>
            <person name="Scanlan E."/>
            <person name="Schleich S."/>
            <person name="Schroeter R."/>
            <person name="Scoffone F."/>
            <person name="Sekiguchi J."/>
            <person name="Sekowska A."/>
            <person name="Seror S.J."/>
            <person name="Serror P."/>
            <person name="Shin B.-S."/>
            <person name="Soldo B."/>
            <person name="Sorokin A."/>
            <person name="Tacconi E."/>
            <person name="Takagi T."/>
            <person name="Takahashi H."/>
            <person name="Takemaru K."/>
            <person name="Takeuchi M."/>
            <person name="Tamakoshi A."/>
            <person name="Tanaka T."/>
            <person name="Terpstra P."/>
            <person name="Tognoni A."/>
            <person name="Tosato V."/>
            <person name="Uchiyama S."/>
            <person name="Vandenbol M."/>
            <person name="Vannier F."/>
            <person name="Vassarotti A."/>
            <person name="Viari A."/>
            <person name="Wambutt R."/>
            <person name="Wedler E."/>
            <person name="Wedler H."/>
            <person name="Weitzenegger T."/>
            <person name="Winters P."/>
            <person name="Wipat A."/>
            <person name="Yamamoto H."/>
            <person name="Yamane K."/>
            <person name="Yasumoto K."/>
            <person name="Yata K."/>
            <person name="Yoshida K."/>
            <person name="Yoshikawa H.-F."/>
            <person name="Zumstein E."/>
            <person name="Yoshikawa H."/>
            <person name="Danchin A."/>
        </authorList>
    </citation>
    <scope>NUCLEOTIDE SEQUENCE [LARGE SCALE GENOMIC DNA]</scope>
    <source>
        <strain>168</strain>
    </source>
</reference>
<reference key="4">
    <citation type="journal article" date="2009" name="Microbiology">
        <title>From a consortium sequence to a unified sequence: the Bacillus subtilis 168 reference genome a decade later.</title>
        <authorList>
            <person name="Barbe V."/>
            <person name="Cruveiller S."/>
            <person name="Kunst F."/>
            <person name="Lenoble P."/>
            <person name="Meurice G."/>
            <person name="Sekowska A."/>
            <person name="Vallenet D."/>
            <person name="Wang T."/>
            <person name="Moszer I."/>
            <person name="Medigue C."/>
            <person name="Danchin A."/>
        </authorList>
    </citation>
    <scope>SEQUENCE REVISION TO 37 AND 63</scope>
</reference>
<reference key="5">
    <citation type="journal article" date="1989" name="Nucleic Acids Res.">
        <title>Cloning and analysis of the spc ribosomal protein operon of Bacillus subtilis: comparison with the spc operon of Escherichia coli.</title>
        <authorList>
            <person name="Henkin T.M."/>
            <person name="Moon S.H."/>
            <person name="Mattheakis L.C."/>
            <person name="Nomura M."/>
        </authorList>
    </citation>
    <scope>NUCLEOTIDE SEQUENCE [GENOMIC DNA] OF 1-25</scope>
    <source>
        <strain>168</strain>
    </source>
</reference>
<reference key="6">
    <citation type="journal article" date="1982" name="Mol. Gen. Genet.">
        <title>Purification and characterization of 30S ribosomal proteins from Bacillus subtilis: correlation to Escherichia coli 30S proteins.</title>
        <authorList>
            <person name="Higo K."/>
            <person name="Otaka E."/>
            <person name="Osawa S."/>
        </authorList>
    </citation>
    <scope>PROTEIN SEQUENCE OF 2-31</scope>
</reference>
<reference evidence="5 6" key="7">
    <citation type="journal article" date="2018" name="Proc. Natl. Acad. Sci. U.S.A.">
        <title>Structural basis for antibiotic resistance mediated by the Bacillus subtilis ABCF ATPase VmlR.</title>
        <authorList>
            <person name="Crowe-McAuliffe C."/>
            <person name="Graf M."/>
            <person name="Huter P."/>
            <person name="Takada H."/>
            <person name="Abdelshahid M."/>
            <person name="Novacek J."/>
            <person name="Murina V."/>
            <person name="Atkinson G.C."/>
            <person name="Hauryliuk V."/>
            <person name="Wilson D.N."/>
        </authorList>
    </citation>
    <scope>STRUCTURE BY ELECTRON MICROSCOPY (3.10 ANGSTROMS) OF 1-132 WITH AND WITHOUT VIRGINIAMYCIN M</scope>
    <scope>SUBUNIT</scope>
</reference>
<gene>
    <name evidence="1" type="primary">rpsH</name>
    <name type="ordered locus">BSU01300</name>
</gene>
<keyword id="KW-0002">3D-structure</keyword>
<keyword id="KW-0903">Direct protein sequencing</keyword>
<keyword id="KW-1185">Reference proteome</keyword>
<keyword id="KW-0687">Ribonucleoprotein</keyword>
<keyword id="KW-0689">Ribosomal protein</keyword>
<keyword id="KW-0694">RNA-binding</keyword>
<keyword id="KW-0699">rRNA-binding</keyword>
<evidence type="ECO:0000255" key="1">
    <source>
        <dbReference type="HAMAP-Rule" id="MF_01302"/>
    </source>
</evidence>
<evidence type="ECO:0000269" key="2">
    <source>
    </source>
</evidence>
<evidence type="ECO:0000269" key="3">
    <source>
    </source>
</evidence>
<evidence type="ECO:0000305" key="4"/>
<evidence type="ECO:0007744" key="5">
    <source>
        <dbReference type="PDB" id="6HA1"/>
    </source>
</evidence>
<evidence type="ECO:0007744" key="6">
    <source>
        <dbReference type="PDB" id="6HA8"/>
    </source>
</evidence>
<evidence type="ECO:0007829" key="7">
    <source>
        <dbReference type="PDB" id="8CDU"/>
    </source>
</evidence>
<dbReference type="EMBL" id="L47971">
    <property type="protein sequence ID" value="AAB06813.1"/>
    <property type="molecule type" value="Genomic_DNA"/>
</dbReference>
<dbReference type="EMBL" id="D64125">
    <property type="protein sequence ID" value="BAA10980.1"/>
    <property type="molecule type" value="Genomic_DNA"/>
</dbReference>
<dbReference type="EMBL" id="AL009126">
    <property type="protein sequence ID" value="CAB11906.2"/>
    <property type="molecule type" value="Genomic_DNA"/>
</dbReference>
<dbReference type="EMBL" id="X15664">
    <property type="protein sequence ID" value="CAA33705.1"/>
    <property type="molecule type" value="Genomic_DNA"/>
</dbReference>
<dbReference type="PIR" id="G69699">
    <property type="entry name" value="G69699"/>
</dbReference>
<dbReference type="RefSeq" id="NP_388011.2">
    <property type="nucleotide sequence ID" value="NC_000964.3"/>
</dbReference>
<dbReference type="RefSeq" id="WP_003241998.1">
    <property type="nucleotide sequence ID" value="NZ_OZ025638.1"/>
</dbReference>
<dbReference type="PDB" id="3J9W">
    <property type="method" value="EM"/>
    <property type="resolution" value="3.90 A"/>
    <property type="chains" value="AH=1-132"/>
</dbReference>
<dbReference type="PDB" id="5NJT">
    <property type="method" value="EM"/>
    <property type="resolution" value="3.80 A"/>
    <property type="chains" value="H=2-132"/>
</dbReference>
<dbReference type="PDB" id="6HA1">
    <property type="method" value="EM"/>
    <property type="resolution" value="3.10 A"/>
    <property type="chains" value="h=1-132"/>
</dbReference>
<dbReference type="PDB" id="6HA8">
    <property type="method" value="EM"/>
    <property type="resolution" value="3.50 A"/>
    <property type="chains" value="h=1-132"/>
</dbReference>
<dbReference type="PDB" id="6HTQ">
    <property type="method" value="EM"/>
    <property type="resolution" value="4.50 A"/>
    <property type="chains" value="h=2-132"/>
</dbReference>
<dbReference type="PDB" id="7O5B">
    <property type="method" value="EM"/>
    <property type="resolution" value="3.33 A"/>
    <property type="chains" value="H=1-132"/>
</dbReference>
<dbReference type="PDB" id="7QGU">
    <property type="method" value="EM"/>
    <property type="resolution" value="4.75 A"/>
    <property type="chains" value="m=1-132"/>
</dbReference>
<dbReference type="PDB" id="7QH4">
    <property type="method" value="EM"/>
    <property type="resolution" value="5.45 A"/>
    <property type="chains" value="l=1-132"/>
</dbReference>
<dbReference type="PDB" id="7QV1">
    <property type="method" value="EM"/>
    <property type="resolution" value="3.50 A"/>
    <property type="chains" value="h=1-132"/>
</dbReference>
<dbReference type="PDB" id="7QV2">
    <property type="method" value="EM"/>
    <property type="resolution" value="3.50 A"/>
    <property type="chains" value="h=1-132"/>
</dbReference>
<dbReference type="PDB" id="7QV3">
    <property type="method" value="EM"/>
    <property type="resolution" value="5.14 A"/>
    <property type="chains" value="h=1-132"/>
</dbReference>
<dbReference type="PDB" id="8BUU">
    <property type="method" value="EM"/>
    <property type="resolution" value="2.90 A"/>
    <property type="chains" value="h=1-132"/>
</dbReference>
<dbReference type="PDB" id="8CDU">
    <property type="method" value="EM"/>
    <property type="resolution" value="3.10 A"/>
    <property type="chains" value="I=1-132"/>
</dbReference>
<dbReference type="PDB" id="8CDV">
    <property type="method" value="EM"/>
    <property type="resolution" value="4.73 A"/>
    <property type="chains" value="I=1-132"/>
</dbReference>
<dbReference type="PDB" id="8CEC">
    <property type="method" value="EM"/>
    <property type="resolution" value="3.57 A"/>
    <property type="chains" value="I=1-132"/>
</dbReference>
<dbReference type="PDB" id="8CED">
    <property type="method" value="EM"/>
    <property type="resolution" value="4.15 A"/>
    <property type="chains" value="I=1-132"/>
</dbReference>
<dbReference type="PDB" id="8CEE">
    <property type="method" value="EM"/>
    <property type="resolution" value="3.70 A"/>
    <property type="chains" value="I=1-132"/>
</dbReference>
<dbReference type="PDB" id="8QCQ">
    <property type="method" value="EM"/>
    <property type="resolution" value="2.30 A"/>
    <property type="chains" value="h=1-132"/>
</dbReference>
<dbReference type="PDB" id="8QPP">
    <property type="method" value="EM"/>
    <property type="resolution" value="3.40 A"/>
    <property type="chains" value="H=1-132"/>
</dbReference>
<dbReference type="PDB" id="8R55">
    <property type="method" value="EM"/>
    <property type="resolution" value="3.57 A"/>
    <property type="chains" value="H=1-132"/>
</dbReference>
<dbReference type="PDBsum" id="3J9W"/>
<dbReference type="PDBsum" id="5NJT"/>
<dbReference type="PDBsum" id="6HA1"/>
<dbReference type="PDBsum" id="6HA8"/>
<dbReference type="PDBsum" id="6HTQ"/>
<dbReference type="PDBsum" id="7O5B"/>
<dbReference type="PDBsum" id="7QGU"/>
<dbReference type="PDBsum" id="7QH4"/>
<dbReference type="PDBsum" id="7QV1"/>
<dbReference type="PDBsum" id="7QV2"/>
<dbReference type="PDBsum" id="7QV3"/>
<dbReference type="PDBsum" id="8BUU"/>
<dbReference type="PDBsum" id="8CDU"/>
<dbReference type="PDBsum" id="8CDV"/>
<dbReference type="PDBsum" id="8CEC"/>
<dbReference type="PDBsum" id="8CED"/>
<dbReference type="PDBsum" id="8CEE"/>
<dbReference type="PDBsum" id="8QCQ"/>
<dbReference type="PDBsum" id="8QPP"/>
<dbReference type="PDBsum" id="8R55"/>
<dbReference type="EMDB" id="EMD-0176"/>
<dbReference type="EMDB" id="EMD-0177"/>
<dbReference type="EMDB" id="EMD-0270"/>
<dbReference type="EMDB" id="EMD-12734"/>
<dbReference type="EMDB" id="EMD-14157"/>
<dbReference type="EMDB" id="EMD-14158"/>
<dbReference type="EMDB" id="EMD-14159"/>
<dbReference type="EMDB" id="EMD-16246"/>
<dbReference type="EMDB" id="EMD-16595"/>
<dbReference type="EMDB" id="EMD-16596"/>
<dbReference type="EMDB" id="EMD-16605"/>
<dbReference type="EMDB" id="EMD-16606"/>
<dbReference type="EMDB" id="EMD-16607"/>
<dbReference type="EMDB" id="EMD-18332"/>
<dbReference type="EMDB" id="EMD-3656"/>
<dbReference type="SMR" id="P12879"/>
<dbReference type="FunCoup" id="P12879">
    <property type="interactions" value="595"/>
</dbReference>
<dbReference type="STRING" id="224308.BSU01300"/>
<dbReference type="jPOST" id="P12879"/>
<dbReference type="PaxDb" id="224308-BSU01300"/>
<dbReference type="EnsemblBacteria" id="CAB11906">
    <property type="protein sequence ID" value="CAB11906"/>
    <property type="gene ID" value="BSU_01300"/>
</dbReference>
<dbReference type="GeneID" id="86875472"/>
<dbReference type="GeneID" id="936328"/>
<dbReference type="KEGG" id="bsu:BSU01300"/>
<dbReference type="PATRIC" id="fig|224308.179.peg.133"/>
<dbReference type="eggNOG" id="COG0096">
    <property type="taxonomic scope" value="Bacteria"/>
</dbReference>
<dbReference type="InParanoid" id="P12879"/>
<dbReference type="OrthoDB" id="9802617at2"/>
<dbReference type="PhylomeDB" id="P12879"/>
<dbReference type="BioCyc" id="BSUB:BSU01300-MONOMER"/>
<dbReference type="PRO" id="PR:P12879"/>
<dbReference type="Proteomes" id="UP000001570">
    <property type="component" value="Chromosome"/>
</dbReference>
<dbReference type="GO" id="GO:0022627">
    <property type="term" value="C:cytosolic small ribosomal subunit"/>
    <property type="evidence" value="ECO:0000318"/>
    <property type="project" value="GO_Central"/>
</dbReference>
<dbReference type="GO" id="GO:0019843">
    <property type="term" value="F:rRNA binding"/>
    <property type="evidence" value="ECO:0007669"/>
    <property type="project" value="UniProtKB-UniRule"/>
</dbReference>
<dbReference type="GO" id="GO:0003735">
    <property type="term" value="F:structural constituent of ribosome"/>
    <property type="evidence" value="ECO:0000318"/>
    <property type="project" value="GO_Central"/>
</dbReference>
<dbReference type="GO" id="GO:0006412">
    <property type="term" value="P:translation"/>
    <property type="evidence" value="ECO:0007669"/>
    <property type="project" value="UniProtKB-UniRule"/>
</dbReference>
<dbReference type="FunFam" id="3.30.1370.30:FF:000002">
    <property type="entry name" value="30S ribosomal protein S8"/>
    <property type="match status" value="1"/>
</dbReference>
<dbReference type="FunFam" id="3.30.1490.10:FF:000001">
    <property type="entry name" value="30S ribosomal protein S8"/>
    <property type="match status" value="1"/>
</dbReference>
<dbReference type="Gene3D" id="3.30.1370.30">
    <property type="match status" value="1"/>
</dbReference>
<dbReference type="Gene3D" id="3.30.1490.10">
    <property type="match status" value="1"/>
</dbReference>
<dbReference type="HAMAP" id="MF_01302_B">
    <property type="entry name" value="Ribosomal_uS8_B"/>
    <property type="match status" value="1"/>
</dbReference>
<dbReference type="InterPro" id="IPR000630">
    <property type="entry name" value="Ribosomal_uS8"/>
</dbReference>
<dbReference type="InterPro" id="IPR047863">
    <property type="entry name" value="Ribosomal_uS8_CS"/>
</dbReference>
<dbReference type="InterPro" id="IPR035987">
    <property type="entry name" value="Ribosomal_uS8_sf"/>
</dbReference>
<dbReference type="NCBIfam" id="NF001109">
    <property type="entry name" value="PRK00136.1"/>
    <property type="match status" value="1"/>
</dbReference>
<dbReference type="PANTHER" id="PTHR11758">
    <property type="entry name" value="40S RIBOSOMAL PROTEIN S15A"/>
    <property type="match status" value="1"/>
</dbReference>
<dbReference type="Pfam" id="PF00410">
    <property type="entry name" value="Ribosomal_S8"/>
    <property type="match status" value="1"/>
</dbReference>
<dbReference type="SUPFAM" id="SSF56047">
    <property type="entry name" value="Ribosomal protein S8"/>
    <property type="match status" value="1"/>
</dbReference>
<dbReference type="PROSITE" id="PS00053">
    <property type="entry name" value="RIBOSOMAL_S8"/>
    <property type="match status" value="1"/>
</dbReference>
<feature type="initiator methionine" description="Removed" evidence="3">
    <location>
        <position position="1"/>
    </location>
</feature>
<feature type="chain" id="PRO_0000126367" description="Small ribosomal subunit protein uS8">
    <location>
        <begin position="2"/>
        <end position="132"/>
    </location>
</feature>
<feature type="sequence conflict" description="In Ref. 6; AA sequence." evidence="4" ref="6">
    <original>NM</original>
    <variation>DN</variation>
    <location>
        <begin position="18"/>
        <end position="19"/>
    </location>
</feature>
<feature type="sequence conflict" description="In Ref. 6; AA sequence." evidence="4" ref="6">
    <original>S</original>
    <variation>B</variation>
    <location>
        <position position="30"/>
    </location>
</feature>
<feature type="sequence conflict" description="In Ref. 2; BAA10980." evidence="4" ref="2">
    <original>A</original>
    <variation>P</variation>
    <location>
        <position position="37"/>
    </location>
</feature>
<feature type="sequence conflict" description="In Ref. 2; BAA10980." evidence="4" ref="2">
    <original>F</original>
    <variation>S</variation>
    <location>
        <position position="63"/>
    </location>
</feature>
<feature type="sequence conflict" description="In Ref. 2; BAA10980." evidence="4" ref="2">
    <location>
        <begin position="131"/>
        <end position="132"/>
    </location>
</feature>
<feature type="helix" evidence="7">
    <location>
        <begin position="6"/>
        <end position="19"/>
    </location>
</feature>
<feature type="strand" evidence="7">
    <location>
        <begin position="23"/>
        <end position="28"/>
    </location>
</feature>
<feature type="helix" evidence="7">
    <location>
        <begin position="31"/>
        <end position="43"/>
    </location>
</feature>
<feature type="strand" evidence="7">
    <location>
        <begin position="45"/>
        <end position="52"/>
    </location>
</feature>
<feature type="strand" evidence="7">
    <location>
        <begin position="55"/>
        <end position="57"/>
    </location>
</feature>
<feature type="strand" evidence="7">
    <location>
        <begin position="59"/>
        <end position="64"/>
    </location>
</feature>
<feature type="turn" evidence="7">
    <location>
        <begin position="68"/>
        <end position="70"/>
    </location>
</feature>
<feature type="strand" evidence="7">
    <location>
        <begin position="71"/>
        <end position="73"/>
    </location>
</feature>
<feature type="strand" evidence="7">
    <location>
        <begin position="76"/>
        <end position="79"/>
    </location>
</feature>
<feature type="helix" evidence="7">
    <location>
        <begin position="98"/>
        <end position="100"/>
    </location>
</feature>
<feature type="strand" evidence="7">
    <location>
        <begin position="102"/>
        <end position="107"/>
    </location>
</feature>
<feature type="helix" evidence="7">
    <location>
        <begin position="115"/>
        <end position="120"/>
    </location>
</feature>
<feature type="strand" evidence="7">
    <location>
        <begin position="125"/>
        <end position="132"/>
    </location>
</feature>
<comment type="function">
    <text evidence="1">One of the primary rRNA binding proteins, it binds directly to 16S rRNA central domain where it helps coordinate assembly of the platform of the 30S subunit.</text>
</comment>
<comment type="subunit">
    <text evidence="1 2">Part of the 30S ribosomal subunit (PubMed:30126986). Contacts proteins S5 and S12 (By similarity).</text>
</comment>
<comment type="similarity">
    <text evidence="1">Belongs to the universal ribosomal protein uS8 family.</text>
</comment>
<name>RS8_BACSU</name>
<accession>P12879</accession>
<accession>P70968</accession>
<protein>
    <recommendedName>
        <fullName evidence="1">Small ribosomal subunit protein uS8</fullName>
    </recommendedName>
    <alternativeName>
        <fullName evidence="4">30S ribosomal protein S8</fullName>
        <shortName>BS8</shortName>
    </alternativeName>
</protein>
<organism>
    <name type="scientific">Bacillus subtilis (strain 168)</name>
    <dbReference type="NCBI Taxonomy" id="224308"/>
    <lineage>
        <taxon>Bacteria</taxon>
        <taxon>Bacillati</taxon>
        <taxon>Bacillota</taxon>
        <taxon>Bacilli</taxon>
        <taxon>Bacillales</taxon>
        <taxon>Bacillaceae</taxon>
        <taxon>Bacillus</taxon>
    </lineage>
</organism>
<sequence>MVMTDPIADMLTRIRNANMVRHEKLEIPASKLKREIAEILKREGFIRDVEFVEDSKQGIIRVFLKYGQNNERVITGLKRISKPGLRVYAKSNEVPRVLNGLGIAIISTSQGVLTDKEARAKQAGGEVLAYVW</sequence>